<proteinExistence type="evidence at transcript level"/>
<keyword id="KW-1015">Disulfide bond</keyword>
<keyword id="KW-0872">Ion channel impairing toxin</keyword>
<keyword id="KW-0528">Neurotoxin</keyword>
<keyword id="KW-0964">Secreted</keyword>
<keyword id="KW-0732">Signal</keyword>
<keyword id="KW-0800">Toxin</keyword>
<keyword id="KW-0738">Voltage-gated sodium channel impairing toxin</keyword>
<protein>
    <recommendedName>
        <fullName>Alpha-toxin Ac1</fullName>
    </recommendedName>
    <alternativeName>
        <fullName>Neurotoxin 1</fullName>
    </alternativeName>
</protein>
<reference key="1">
    <citation type="journal article" date="2010" name="Mol. Biol. Evol.">
        <title>Positions under positive selection--key for selectivity and potency of scorpion alpha-toxins.</title>
        <authorList>
            <person name="Weinberger H."/>
            <person name="Moran Y."/>
            <person name="Gordon D."/>
            <person name="Turkov M."/>
            <person name="Kahn R."/>
            <person name="Gurevitz M."/>
        </authorList>
    </citation>
    <scope>NUCLEOTIDE SEQUENCE [MRNA]</scope>
    <source>
        <tissue>Venom gland</tissue>
    </source>
</reference>
<evidence type="ECO:0000250" key="1"/>
<evidence type="ECO:0000250" key="2">
    <source>
        <dbReference type="UniProtKB" id="P01479"/>
    </source>
</evidence>
<evidence type="ECO:0000255" key="3">
    <source>
        <dbReference type="PROSITE-ProRule" id="PRU01210"/>
    </source>
</evidence>
<evidence type="ECO:0000305" key="4"/>
<comment type="function">
    <text evidence="2">Alpha toxins bind voltage-independently at site-3 of sodium channels (Nav) and inhibit the inactivation of the activated channels, thereby blocking neuronal transmission.</text>
</comment>
<comment type="subcellular location">
    <subcellularLocation>
        <location evidence="1">Secreted</location>
    </subcellularLocation>
</comment>
<comment type="tissue specificity">
    <text evidence="4">Expressed by the venom gland.</text>
</comment>
<comment type="domain">
    <text evidence="4">Has the structural arrangement of an alpha-helix connected to antiparallel beta-sheets by disulfide bonds (CS-alpha/beta).</text>
</comment>
<comment type="similarity">
    <text evidence="4">Belongs to the long (4 C-C) scorpion toxin superfamily. Sodium channel inhibitor family. Alpha subfamily.</text>
</comment>
<dbReference type="EMBL" id="GQ335450">
    <property type="protein sequence ID" value="ADE42764.1"/>
    <property type="molecule type" value="mRNA"/>
</dbReference>
<dbReference type="SMR" id="D5HR50"/>
<dbReference type="GO" id="GO:0005576">
    <property type="term" value="C:extracellular region"/>
    <property type="evidence" value="ECO:0007669"/>
    <property type="project" value="UniProtKB-SubCell"/>
</dbReference>
<dbReference type="GO" id="GO:0019871">
    <property type="term" value="F:sodium channel inhibitor activity"/>
    <property type="evidence" value="ECO:0007669"/>
    <property type="project" value="InterPro"/>
</dbReference>
<dbReference type="GO" id="GO:0090729">
    <property type="term" value="F:toxin activity"/>
    <property type="evidence" value="ECO:0007669"/>
    <property type="project" value="UniProtKB-KW"/>
</dbReference>
<dbReference type="GO" id="GO:0006952">
    <property type="term" value="P:defense response"/>
    <property type="evidence" value="ECO:0007669"/>
    <property type="project" value="InterPro"/>
</dbReference>
<dbReference type="CDD" id="cd23106">
    <property type="entry name" value="neurotoxins_LC_scorpion"/>
    <property type="match status" value="1"/>
</dbReference>
<dbReference type="Gene3D" id="3.30.30.10">
    <property type="entry name" value="Knottin, scorpion toxin-like"/>
    <property type="match status" value="1"/>
</dbReference>
<dbReference type="InterPro" id="IPR044062">
    <property type="entry name" value="LCN-type_CS_alpha_beta_dom"/>
</dbReference>
<dbReference type="InterPro" id="IPR003614">
    <property type="entry name" value="Scorpion_toxin-like"/>
</dbReference>
<dbReference type="InterPro" id="IPR036574">
    <property type="entry name" value="Scorpion_toxin-like_sf"/>
</dbReference>
<dbReference type="InterPro" id="IPR018218">
    <property type="entry name" value="Scorpion_toxinL"/>
</dbReference>
<dbReference type="InterPro" id="IPR002061">
    <property type="entry name" value="Scorpion_toxinL/defensin"/>
</dbReference>
<dbReference type="Pfam" id="PF00537">
    <property type="entry name" value="Toxin_3"/>
    <property type="match status" value="1"/>
</dbReference>
<dbReference type="PRINTS" id="PR00285">
    <property type="entry name" value="SCORPNTOXIN"/>
</dbReference>
<dbReference type="SMART" id="SM00505">
    <property type="entry name" value="Knot1"/>
    <property type="match status" value="1"/>
</dbReference>
<dbReference type="SUPFAM" id="SSF57095">
    <property type="entry name" value="Scorpion toxin-like"/>
    <property type="match status" value="1"/>
</dbReference>
<dbReference type="PROSITE" id="PS51863">
    <property type="entry name" value="LCN_CSAB"/>
    <property type="match status" value="1"/>
</dbReference>
<organism>
    <name type="scientific">Androctonus crassicauda</name>
    <name type="common">Arabian fat-tailed scorpion</name>
    <dbReference type="NCBI Taxonomy" id="122909"/>
    <lineage>
        <taxon>Eukaryota</taxon>
        <taxon>Metazoa</taxon>
        <taxon>Ecdysozoa</taxon>
        <taxon>Arthropoda</taxon>
        <taxon>Chelicerata</taxon>
        <taxon>Arachnida</taxon>
        <taxon>Scorpiones</taxon>
        <taxon>Buthida</taxon>
        <taxon>Buthoidea</taxon>
        <taxon>Buthidae</taxon>
        <taxon>Androctonus</taxon>
    </lineage>
</organism>
<feature type="signal peptide" evidence="2">
    <location>
        <begin position="1" status="less than"/>
        <end position="17"/>
    </location>
</feature>
<feature type="chain" id="PRO_5000585055" description="Alpha-toxin Ac1">
    <location>
        <begin position="18"/>
        <end position="80"/>
    </location>
</feature>
<feature type="domain" description="LCN-type CS-alpha/beta" evidence="3">
    <location>
        <begin position="19"/>
        <end position="80"/>
    </location>
</feature>
<feature type="disulfide bond" evidence="3">
    <location>
        <begin position="29"/>
        <end position="79"/>
    </location>
</feature>
<feature type="disulfide bond" evidence="3">
    <location>
        <begin position="33"/>
        <end position="51"/>
    </location>
</feature>
<feature type="disulfide bond" evidence="3">
    <location>
        <begin position="37"/>
        <end position="61"/>
    </location>
</feature>
<feature type="disulfide bond" evidence="3">
    <location>
        <begin position="41"/>
        <end position="63"/>
    </location>
</feature>
<feature type="non-terminal residue">
    <location>
        <position position="1"/>
    </location>
</feature>
<name>SCX1A_ANDCR</name>
<sequence length="81" mass="8702">YIVMISLALVVMIGVESVRDGYIVYPNNCVYHCIPACDGLCKKNGGTSGSCSFLIGSGIACWCKDLPDNVPIKDPSQKCTR</sequence>
<accession>D5HR50</accession>